<comment type="function">
    <text evidence="1">Endonuclease that specifically degrades the RNA of RNA-DNA hybrids.</text>
</comment>
<comment type="catalytic activity">
    <reaction evidence="1">
        <text>Endonucleolytic cleavage to 5'-phosphomonoester.</text>
        <dbReference type="EC" id="3.1.26.4"/>
    </reaction>
</comment>
<comment type="cofactor">
    <cofactor evidence="1">
        <name>Mn(2+)</name>
        <dbReference type="ChEBI" id="CHEBI:29035"/>
    </cofactor>
    <cofactor evidence="1">
        <name>Mg(2+)</name>
        <dbReference type="ChEBI" id="CHEBI:18420"/>
    </cofactor>
    <text evidence="1">Manganese or magnesium. Binds 1 divalent metal ion per monomer in the absence of substrate. May bind a second metal ion after substrate binding.</text>
</comment>
<comment type="subcellular location">
    <subcellularLocation>
        <location evidence="1">Cytoplasm</location>
    </subcellularLocation>
</comment>
<comment type="similarity">
    <text evidence="1">Belongs to the RNase HII family.</text>
</comment>
<reference key="1">
    <citation type="journal article" date="2001" name="J. Bacteriol.">
        <title>Genome sequence and comparative analysis of the solvent-producing bacterium Clostridium acetobutylicum.</title>
        <authorList>
            <person name="Noelling J."/>
            <person name="Breton G."/>
            <person name="Omelchenko M.V."/>
            <person name="Makarova K.S."/>
            <person name="Zeng Q."/>
            <person name="Gibson R."/>
            <person name="Lee H.M."/>
            <person name="Dubois J."/>
            <person name="Qiu D."/>
            <person name="Hitti J."/>
            <person name="Wolf Y.I."/>
            <person name="Tatusov R.L."/>
            <person name="Sabathe F."/>
            <person name="Doucette-Stamm L.A."/>
            <person name="Soucaille P."/>
            <person name="Daly M.J."/>
            <person name="Bennett G.N."/>
            <person name="Koonin E.V."/>
            <person name="Smith D.R."/>
        </authorList>
    </citation>
    <scope>NUCLEOTIDE SEQUENCE [LARGE SCALE GENOMIC DNA]</scope>
    <source>
        <strain>ATCC 824 / DSM 792 / JCM 1419 / IAM 19013 / LMG 5710 / NBRC 13948 / NRRL B-527 / VKM B-1787 / 2291 / W</strain>
    </source>
</reference>
<feature type="chain" id="PRO_0000111564" description="Ribonuclease HII">
    <location>
        <begin position="1"/>
        <end position="254"/>
    </location>
</feature>
<feature type="domain" description="RNase H type-2" evidence="2">
    <location>
        <begin position="67"/>
        <end position="254"/>
    </location>
</feature>
<feature type="binding site" evidence="1">
    <location>
        <position position="73"/>
    </location>
    <ligand>
        <name>a divalent metal cation</name>
        <dbReference type="ChEBI" id="CHEBI:60240"/>
    </ligand>
</feature>
<feature type="binding site" evidence="1">
    <location>
        <position position="74"/>
    </location>
    <ligand>
        <name>a divalent metal cation</name>
        <dbReference type="ChEBI" id="CHEBI:60240"/>
    </ligand>
</feature>
<feature type="binding site" evidence="1">
    <location>
        <position position="170"/>
    </location>
    <ligand>
        <name>a divalent metal cation</name>
        <dbReference type="ChEBI" id="CHEBI:60240"/>
    </ligand>
</feature>
<evidence type="ECO:0000255" key="1">
    <source>
        <dbReference type="HAMAP-Rule" id="MF_00052"/>
    </source>
</evidence>
<evidence type="ECO:0000255" key="2">
    <source>
        <dbReference type="PROSITE-ProRule" id="PRU01319"/>
    </source>
</evidence>
<sequence>MSFKEIKSTLEDMDEQSRLSAAHDIMDDTRKNVKSLGKKILNAYEKKQNEIARVKKLYEFDKQFGNIVIAGVDEVGRGPLAGPIVGAAVILELNVEKDLDLILGINDSKKLSSKKRQELSEIIKEKALAWEIASLDNNEIDKKGISWCNNEIFKIAISKLKKVPELVISDGYAVKGIGIKNHYIVKGDAQSASIACASIIAKVYRDNLMGEYAKSYSEYGFESNVGYGSKDHIDAIKKFGTTPIHRMSFLKNII</sequence>
<name>RNH2_CLOAB</name>
<dbReference type="EC" id="3.1.26.4" evidence="1"/>
<dbReference type="EMBL" id="AE001437">
    <property type="protein sequence ID" value="AAK79728.1"/>
    <property type="molecule type" value="Genomic_DNA"/>
</dbReference>
<dbReference type="PIR" id="E97117">
    <property type="entry name" value="E97117"/>
</dbReference>
<dbReference type="RefSeq" id="NP_348388.1">
    <property type="nucleotide sequence ID" value="NC_003030.1"/>
</dbReference>
<dbReference type="RefSeq" id="WP_010965069.1">
    <property type="nucleotide sequence ID" value="NC_003030.1"/>
</dbReference>
<dbReference type="SMR" id="Q97I90"/>
<dbReference type="STRING" id="272562.CA_C1762"/>
<dbReference type="KEGG" id="cac:CA_C1762"/>
<dbReference type="PATRIC" id="fig|272562.8.peg.1966"/>
<dbReference type="eggNOG" id="COG0164">
    <property type="taxonomic scope" value="Bacteria"/>
</dbReference>
<dbReference type="HOGENOM" id="CLU_036532_2_1_9"/>
<dbReference type="OrthoDB" id="9803420at2"/>
<dbReference type="Proteomes" id="UP000000814">
    <property type="component" value="Chromosome"/>
</dbReference>
<dbReference type="GO" id="GO:0005737">
    <property type="term" value="C:cytoplasm"/>
    <property type="evidence" value="ECO:0007669"/>
    <property type="project" value="UniProtKB-SubCell"/>
</dbReference>
<dbReference type="GO" id="GO:0032299">
    <property type="term" value="C:ribonuclease H2 complex"/>
    <property type="evidence" value="ECO:0007669"/>
    <property type="project" value="TreeGrafter"/>
</dbReference>
<dbReference type="GO" id="GO:0030145">
    <property type="term" value="F:manganese ion binding"/>
    <property type="evidence" value="ECO:0007669"/>
    <property type="project" value="UniProtKB-UniRule"/>
</dbReference>
<dbReference type="GO" id="GO:0003723">
    <property type="term" value="F:RNA binding"/>
    <property type="evidence" value="ECO:0007669"/>
    <property type="project" value="InterPro"/>
</dbReference>
<dbReference type="GO" id="GO:0004523">
    <property type="term" value="F:RNA-DNA hybrid ribonuclease activity"/>
    <property type="evidence" value="ECO:0007669"/>
    <property type="project" value="UniProtKB-UniRule"/>
</dbReference>
<dbReference type="GO" id="GO:0043137">
    <property type="term" value="P:DNA replication, removal of RNA primer"/>
    <property type="evidence" value="ECO:0007669"/>
    <property type="project" value="TreeGrafter"/>
</dbReference>
<dbReference type="GO" id="GO:0006298">
    <property type="term" value="P:mismatch repair"/>
    <property type="evidence" value="ECO:0007669"/>
    <property type="project" value="TreeGrafter"/>
</dbReference>
<dbReference type="CDD" id="cd07182">
    <property type="entry name" value="RNase_HII_bacteria_HII_like"/>
    <property type="match status" value="1"/>
</dbReference>
<dbReference type="Gene3D" id="3.30.420.10">
    <property type="entry name" value="Ribonuclease H-like superfamily/Ribonuclease H"/>
    <property type="match status" value="1"/>
</dbReference>
<dbReference type="HAMAP" id="MF_00052_B">
    <property type="entry name" value="RNase_HII_B"/>
    <property type="match status" value="1"/>
</dbReference>
<dbReference type="InterPro" id="IPR022898">
    <property type="entry name" value="RNase_HII"/>
</dbReference>
<dbReference type="InterPro" id="IPR001352">
    <property type="entry name" value="RNase_HII/HIII"/>
</dbReference>
<dbReference type="InterPro" id="IPR024567">
    <property type="entry name" value="RNase_HII/HIII_dom"/>
</dbReference>
<dbReference type="InterPro" id="IPR012337">
    <property type="entry name" value="RNaseH-like_sf"/>
</dbReference>
<dbReference type="InterPro" id="IPR036397">
    <property type="entry name" value="RNaseH_sf"/>
</dbReference>
<dbReference type="NCBIfam" id="NF000594">
    <property type="entry name" value="PRK00015.1-1"/>
    <property type="match status" value="1"/>
</dbReference>
<dbReference type="NCBIfam" id="NF000595">
    <property type="entry name" value="PRK00015.1-3"/>
    <property type="match status" value="1"/>
</dbReference>
<dbReference type="PANTHER" id="PTHR10954">
    <property type="entry name" value="RIBONUCLEASE H2 SUBUNIT A"/>
    <property type="match status" value="1"/>
</dbReference>
<dbReference type="PANTHER" id="PTHR10954:SF18">
    <property type="entry name" value="RIBONUCLEASE HII"/>
    <property type="match status" value="1"/>
</dbReference>
<dbReference type="Pfam" id="PF01351">
    <property type="entry name" value="RNase_HII"/>
    <property type="match status" value="1"/>
</dbReference>
<dbReference type="SUPFAM" id="SSF53098">
    <property type="entry name" value="Ribonuclease H-like"/>
    <property type="match status" value="1"/>
</dbReference>
<dbReference type="PROSITE" id="PS51975">
    <property type="entry name" value="RNASE_H_2"/>
    <property type="match status" value="1"/>
</dbReference>
<gene>
    <name evidence="1" type="primary">rnhB</name>
    <name type="ordered locus">CA_C1762</name>
</gene>
<protein>
    <recommendedName>
        <fullName evidence="1">Ribonuclease HII</fullName>
        <shortName evidence="1">RNase HII</shortName>
        <ecNumber evidence="1">3.1.26.4</ecNumber>
    </recommendedName>
</protein>
<accession>Q97I90</accession>
<proteinExistence type="inferred from homology"/>
<organism>
    <name type="scientific">Clostridium acetobutylicum (strain ATCC 824 / DSM 792 / JCM 1419 / IAM 19013 / LMG 5710 / NBRC 13948 / NRRL B-527 / VKM B-1787 / 2291 / W)</name>
    <dbReference type="NCBI Taxonomy" id="272562"/>
    <lineage>
        <taxon>Bacteria</taxon>
        <taxon>Bacillati</taxon>
        <taxon>Bacillota</taxon>
        <taxon>Clostridia</taxon>
        <taxon>Eubacteriales</taxon>
        <taxon>Clostridiaceae</taxon>
        <taxon>Clostridium</taxon>
    </lineage>
</organism>
<keyword id="KW-0963">Cytoplasm</keyword>
<keyword id="KW-0255">Endonuclease</keyword>
<keyword id="KW-0378">Hydrolase</keyword>
<keyword id="KW-0464">Manganese</keyword>
<keyword id="KW-0479">Metal-binding</keyword>
<keyword id="KW-0540">Nuclease</keyword>
<keyword id="KW-1185">Reference proteome</keyword>